<keyword id="KW-0002">3D-structure</keyword>
<keyword id="KW-0066">ATP synthesis</keyword>
<keyword id="KW-0139">CF(1)</keyword>
<keyword id="KW-0903">Direct protein sequencing</keyword>
<keyword id="KW-0375">Hydrogen ion transport</keyword>
<keyword id="KW-0406">Ion transport</keyword>
<keyword id="KW-0472">Membrane</keyword>
<keyword id="KW-0496">Mitochondrion</keyword>
<keyword id="KW-0999">Mitochondrion inner membrane</keyword>
<keyword id="KW-0809">Transit peptide</keyword>
<keyword id="KW-0813">Transport</keyword>
<accession>P0DPG2</accession>
<accession>A0A2U3T1L6</accession>
<sequence length="182" mass="20157">MFRTFGRRLVSCTLPLLQSAPHDLPEGFEFMEHKVVNKDIHAPHENLEXLRLTLTRQDEFLLREEPVKCVTVTGTNGEYGIYPGHAYKIVQLNPSPLTVEYTDGTTKKYFVSGGFAHINNEGSCDVNTVECTLLDDLDLAIAEKELAAQQAALGSAKDDKAKSVVEIRISVIEAVIAALKHH</sequence>
<evidence type="ECO:0000269" key="1">
    <source>
    </source>
</evidence>
<evidence type="ECO:0000269" key="2">
    <source>
    </source>
</evidence>
<evidence type="ECO:0000269" key="3">
    <source>
    </source>
</evidence>
<evidence type="ECO:0000303" key="4">
    <source>
    </source>
</evidence>
<evidence type="ECO:0000305" key="5"/>
<evidence type="ECO:0000305" key="6">
    <source>
    </source>
</evidence>
<evidence type="ECO:0000305" key="7">
    <source>
    </source>
</evidence>
<evidence type="ECO:0000305" key="8">
    <source>
    </source>
</evidence>
<comment type="function">
    <text evidence="1 2 3 5">Mitochondrial membrane ATP synthase (F(1)F(o) ATP synthase) produces ATP from ADP in the presence of a proton gradient across the membrane which is generated by electron transport complexes of the respiratory chain (PubMed:19436713, PubMed:29247468). F-type ATPases consist of two structural domains, F(1) - containing the extramembraneous catalytic core, and F(o) - containing the membrane proton channel, linked together by a central stalk and a peripheral stalk (PubMed:19436713, PubMed:29247468, PubMed:29440423). During catalysis, ATP synthesis in the catalytic domain of F(1) is coupled via a rotary mechanism of the central stalk subunits to proton translocation. Subunits alpha and beta form the catalytic core in F(1) (PubMed:19436713, PubMed:29440423). Rotation of the central stalk against the surrounding alpha(3)beta(3) subunits leads to hydrolysis of ATP in three separate catalytic sites on the beta subunits (Probable). Contrary to the procyclic, insect form that requires F(1)F(o) ATP synthase for ATP synthesis, the bloodstream form relies on ATP hydrolysis by F(1)F(o) ATP synthase to maintain its mitochondrial membrane potential (PubMed:29247468).</text>
</comment>
<comment type="subunit">
    <text evidence="1 2 3">F-type ATPases have 2 components, F(1) - the catalytic core - and F(o) - the membrane proton channel. F(1) has five subunits: alpha(3), beta(3), gamma(1), delta(1), epsilon(1), plus the additional subunit P18 (Tb427.05.1710) that is not present in F(1)F(o) ATP synthase from metazoa (PubMed:19436713, PubMed:29247468, PubMed:29440423). Subunit P18 (Tb927.5.1710) interacts with the alpha subunit with a 1:1 stoichiometry; the interaction is direct (PubMed:29440423). Subunit gamma is part of the central stalk (PubMed:29440423). F(o) has three main subunits: a, b and c (PubMed:19436713). The trypanosomal ATPase complex contains additional subunits that are not present in the F(1)F(o) ATP synthase from metazoa (PubMed:19436713, PubMed:29247468, PubMed:29440423).</text>
</comment>
<comment type="subcellular location">
    <subcellularLocation>
        <location>Mitochondrion</location>
    </subcellularLocation>
    <subcellularLocation>
        <location evidence="1 2 3">Mitochondrion inner membrane</location>
        <topology evidence="1 2 3">Peripheral membrane protein</topology>
        <orientation evidence="6 7 8">Matrix side</orientation>
    </subcellularLocation>
</comment>
<comment type="similarity">
    <text evidence="5">Belongs to the ATPase epsilon chain family.</text>
</comment>
<reference key="1">
    <citation type="journal article" date="2018" name="Proc. Natl. Acad. Sci. U.S.A.">
        <title>ATP synthase from Trypanosoma brucei has an elaborated canonical F1-domain and conventional catalytic sites.</title>
        <authorList>
            <person name="Montgomery M.G."/>
            <person name="Gahura O."/>
            <person name="Leslie A.G.W."/>
            <person name="Zikova A."/>
            <person name="Walker J.E."/>
        </authorList>
    </citation>
    <scope>NUCLEOTIDE SEQUENCE [GENOMIC DNA]</scope>
    <scope>X-RAY CRYSTALLOGRAPHY (3.2 ANGSTROMS) OF 18-182</scope>
    <scope>FUNCTION</scope>
    <scope>SUBCELLULAR LOCATION</scope>
    <scope>SUBUNIT</scope>
    <source>
        <strain>427</strain>
    </source>
</reference>
<reference key="2">
    <citation type="journal article" date="2009" name="PLoS Pathog.">
        <title>The F(0)F(1)-ATP synthase complex contains novel subunits and is essential for procyclic Trypanosoma brucei.</title>
        <authorList>
            <person name="Zikova A."/>
            <person name="Schnaufer A."/>
            <person name="Dalley R.A."/>
            <person name="Panigrahi A.K."/>
            <person name="Stuart K.D."/>
        </authorList>
    </citation>
    <scope>FUNCTION</scope>
    <scope>SUBCELLULAR LOCATION</scope>
    <scope>SUBUNIT</scope>
    <scope>IDENTIFICATION BY MASS SPECTROMETRY</scope>
    <scope>NOMENCLATURE</scope>
    <source>
        <strain>427</strain>
    </source>
</reference>
<reference key="3">
    <citation type="journal article" date="2018" name="FEBS J.">
        <title>The F1-ATPase from Trypanosoma brucei is elaborated by three copies of an additional p18-subunit.</title>
        <authorList>
            <person name="Gahura O."/>
            <person name="Subrtova K."/>
            <person name="Vachova H."/>
            <person name="Panicucci B."/>
            <person name="Fearnley I.M."/>
            <person name="Harbour M.E."/>
            <person name="Walker J.E."/>
            <person name="Zikova A."/>
        </authorList>
    </citation>
    <scope>FUNCTION</scope>
    <scope>PROTEIN SEQUENCE OF 18-22</scope>
    <scope>SUBCELLULAR LOCATION</scope>
    <scope>SUBUNIT</scope>
    <scope>IDENTIFICATION BY MASS SPECTROMETRY</scope>
    <source>
        <strain>427</strain>
    </source>
</reference>
<dbReference type="EMBL" id="LS423646">
    <property type="protein sequence ID" value="SPS16792.1"/>
    <property type="molecule type" value="Genomic_DNA"/>
</dbReference>
<dbReference type="PDB" id="6F5D">
    <property type="method" value="X-ray"/>
    <property type="resolution" value="3.20 A"/>
    <property type="chains" value="H=18-182"/>
</dbReference>
<dbReference type="PDBsum" id="6F5D"/>
<dbReference type="EMDB" id="EMD-15564"/>
<dbReference type="TCDB" id="3.A.2.1.13">
    <property type="family name" value="the h+- or na+-translocating f-type, v-type and a-type atpase (f-atpase) superfamily"/>
</dbReference>
<dbReference type="GO" id="GO:0005743">
    <property type="term" value="C:mitochondrial inner membrane"/>
    <property type="evidence" value="ECO:0007669"/>
    <property type="project" value="UniProtKB-SubCell"/>
</dbReference>
<dbReference type="GO" id="GO:0045259">
    <property type="term" value="C:proton-transporting ATP synthase complex"/>
    <property type="evidence" value="ECO:0007669"/>
    <property type="project" value="UniProtKB-KW"/>
</dbReference>
<dbReference type="GO" id="GO:0046933">
    <property type="term" value="F:proton-transporting ATP synthase activity, rotational mechanism"/>
    <property type="evidence" value="ECO:0007669"/>
    <property type="project" value="InterPro"/>
</dbReference>
<dbReference type="CDD" id="cd12152">
    <property type="entry name" value="F1-ATPase_delta"/>
    <property type="match status" value="1"/>
</dbReference>
<dbReference type="FunFam" id="2.60.15.10:FF:000014">
    <property type="entry name" value="ATP synthase, epsilon chain, putative"/>
    <property type="match status" value="1"/>
</dbReference>
<dbReference type="Gene3D" id="2.60.15.10">
    <property type="entry name" value="F0F1 ATP synthase delta/epsilon subunit, N-terminal"/>
    <property type="match status" value="1"/>
</dbReference>
<dbReference type="HAMAP" id="MF_00530">
    <property type="entry name" value="ATP_synth_epsil_bac"/>
    <property type="match status" value="1"/>
</dbReference>
<dbReference type="InterPro" id="IPR001469">
    <property type="entry name" value="ATP_synth_F1_dsu/esu"/>
</dbReference>
<dbReference type="InterPro" id="IPR020546">
    <property type="entry name" value="ATP_synth_F1_dsu/esu_N"/>
</dbReference>
<dbReference type="InterPro" id="IPR036771">
    <property type="entry name" value="ATPsynth_dsu/esu_N"/>
</dbReference>
<dbReference type="PANTHER" id="PTHR13822">
    <property type="entry name" value="ATP SYNTHASE DELTA/EPSILON CHAIN"/>
    <property type="match status" value="1"/>
</dbReference>
<dbReference type="PANTHER" id="PTHR13822:SF7">
    <property type="entry name" value="ATP SYNTHASE SUBUNIT DELTA, MITOCHONDRIAL"/>
    <property type="match status" value="1"/>
</dbReference>
<dbReference type="Pfam" id="PF02823">
    <property type="entry name" value="ATP-synt_DE_N"/>
    <property type="match status" value="1"/>
</dbReference>
<dbReference type="SUPFAM" id="SSF51344">
    <property type="entry name" value="Epsilon subunit of F1F0-ATP synthase N-terminal domain"/>
    <property type="match status" value="1"/>
</dbReference>
<name>ATPD_TRYBB</name>
<protein>
    <recommendedName>
        <fullName>ATP synthase subunit delta, mitochondrial</fullName>
    </recommendedName>
    <alternativeName>
        <fullName evidence="4">ATP synthase F1 subunit delta</fullName>
    </alternativeName>
</protein>
<feature type="transit peptide" description="Mitochondrion" evidence="2">
    <location>
        <begin position="1"/>
        <end position="17"/>
    </location>
</feature>
<feature type="chain" id="PRO_0000444144" description="ATP synthase subunit delta, mitochondrial">
    <location>
        <begin position="18"/>
        <end position="182"/>
    </location>
</feature>
<gene>
    <name evidence="4" type="ORF">Tb427.06.4990</name>
</gene>
<organism>
    <name type="scientific">Trypanosoma brucei brucei</name>
    <dbReference type="NCBI Taxonomy" id="5702"/>
    <lineage>
        <taxon>Eukaryota</taxon>
        <taxon>Discoba</taxon>
        <taxon>Euglenozoa</taxon>
        <taxon>Kinetoplastea</taxon>
        <taxon>Metakinetoplastina</taxon>
        <taxon>Trypanosomatida</taxon>
        <taxon>Trypanosomatidae</taxon>
        <taxon>Trypanosoma</taxon>
    </lineage>
</organism>
<proteinExistence type="evidence at protein level"/>